<organism>
    <name type="scientific">Tityus serrulatus</name>
    <name type="common">Brazilian scorpion</name>
    <dbReference type="NCBI Taxonomy" id="6887"/>
    <lineage>
        <taxon>Eukaryota</taxon>
        <taxon>Metazoa</taxon>
        <taxon>Ecdysozoa</taxon>
        <taxon>Arthropoda</taxon>
        <taxon>Chelicerata</taxon>
        <taxon>Arachnida</taxon>
        <taxon>Scorpiones</taxon>
        <taxon>Buthida</taxon>
        <taxon>Buthoidea</taxon>
        <taxon>Buthidae</taxon>
        <taxon>Tityus</taxon>
    </lineage>
</organism>
<accession>A0A218QX08</accession>
<feature type="signal peptide" evidence="3">
    <location>
        <begin position="1"/>
        <end position="23"/>
    </location>
</feature>
<feature type="chain" id="PRO_5011910044" description="Putative sodium channel toxin Ts28">
    <location>
        <begin position="24"/>
        <end position="90"/>
    </location>
</feature>
<feature type="domain" description="LCN-type CS-alpha/beta" evidence="4">
    <location>
        <begin position="26"/>
        <end position="86"/>
    </location>
</feature>
<feature type="disulfide bond" evidence="4">
    <location>
        <begin position="40"/>
        <end position="60"/>
    </location>
</feature>
<feature type="disulfide bond" evidence="4">
    <location>
        <begin position="46"/>
        <end position="65"/>
    </location>
</feature>
<feature type="disulfide bond" evidence="4">
    <location>
        <begin position="50"/>
        <end position="67"/>
    </location>
</feature>
<reference evidence="9 10" key="1">
    <citation type="journal article" date="2018" name="PLoS ONE">
        <title>Proteomic endorsed transcriptomic profiles of venom glands from Tityus obscurus and T. serrulatus scorpions.</title>
        <authorList>
            <person name="de Oliveira U.C."/>
            <person name="Nishiyama M.Y. Jr."/>
            <person name="Dos Santos M.B.V."/>
            <person name="Santos-da-Silva A.P."/>
            <person name="Chalkidis H.M."/>
            <person name="Souza-Imberg A."/>
            <person name="Candido D.M."/>
            <person name="Yamanouye N."/>
            <person name="Dorce V.A.C."/>
            <person name="Junqueira-de-Azevedo I.L.M."/>
        </authorList>
    </citation>
    <scope>NUCLEOTIDE SEQUENCE [MRNA]</scope>
    <source>
        <tissue>Telson</tissue>
    </source>
</reference>
<reference evidence="11" key="2">
    <citation type="journal article" date="2021" name="Toxicon">
        <title>Novel components of Tityus serrulatus venom: a transcriptomic approach.</title>
        <authorList>
            <person name="Kalapothakis Y."/>
            <person name="Miranda K."/>
            <person name="Pereira A.H."/>
            <person name="Witt A.S.A."/>
            <person name="Marani C."/>
            <person name="Martins A.P."/>
            <person name="Leal H.G."/>
            <person name="Campos-Junior E."/>
            <person name="Pimenta A.M.C."/>
            <person name="Borges A."/>
            <person name="Chavez-Olortegui C."/>
            <person name="Kalapothakis E."/>
        </authorList>
    </citation>
    <scope>NUCLEOTIDE SEQUENCE [MRNA]</scope>
    <source>
        <tissue>Telson</tissue>
    </source>
</reference>
<protein>
    <recommendedName>
        <fullName evidence="5">Putative sodium channel toxin Ts28</fullName>
    </recommendedName>
    <alternativeName>
        <fullName evidence="5">Putative NaTx</fullName>
    </alternativeName>
    <alternativeName>
        <fullName evidence="1">Putative lipolysis-activating peptide</fullName>
    </alternativeName>
    <alternativeName>
        <fullName evidence="6">Tityustoxin-28</fullName>
    </alternativeName>
</protein>
<name>LVA28_TITSE</name>
<evidence type="ECO:0000250" key="1">
    <source>
        <dbReference type="UniProtKB" id="P84810"/>
    </source>
</evidence>
<evidence type="ECO:0000250" key="2">
    <source>
        <dbReference type="UniProtKB" id="Q6WJF5"/>
    </source>
</evidence>
<evidence type="ECO:0000255" key="3"/>
<evidence type="ECO:0000255" key="4">
    <source>
        <dbReference type="PROSITE-ProRule" id="PRU01210"/>
    </source>
</evidence>
<evidence type="ECO:0000303" key="5">
    <source>
    </source>
</evidence>
<evidence type="ECO:0000305" key="6"/>
<evidence type="ECO:0000305" key="7">
    <source>
    </source>
</evidence>
<evidence type="ECO:0000305" key="8">
    <source>
    </source>
</evidence>
<evidence type="ECO:0000312" key="9">
    <source>
        <dbReference type="EMBL" id="JAW06977.1"/>
    </source>
</evidence>
<evidence type="ECO:0000312" key="10">
    <source>
        <dbReference type="EMBL" id="JAW07017.1"/>
    </source>
</evidence>
<evidence type="ECO:0000312" key="11">
    <source>
        <dbReference type="EMBL" id="QPD99056.1"/>
    </source>
</evidence>
<keyword id="KW-1015">Disulfide bond</keyword>
<keyword id="KW-0872">Ion channel impairing toxin</keyword>
<keyword id="KW-0528">Neurotoxin</keyword>
<keyword id="KW-0964">Secreted</keyword>
<keyword id="KW-0732">Signal</keyword>
<keyword id="KW-0800">Toxin</keyword>
<keyword id="KW-0738">Voltage-gated sodium channel impairing toxin</keyword>
<comment type="function">
    <text evidence="1">The edited BmKBTx-like may modulate voltage-gated sodium channels (Nav).</text>
</comment>
<comment type="function">
    <text evidence="1 8">The non-edited form is able to form a heterodimer (By similarity). In orthologs, a heterodimer with LVP beta-chain induces lipolysis in rat adipocytes, which is mediated through the beta-2 adrenergic receptor pathway (ADRB2) (By similarity). Since no LVP beta-chains have been identified in the venom of this scorpion, it is possible that this protein is not involved in a lipolysis process (Probable).</text>
</comment>
<comment type="subunit">
    <text evidence="1">Monomer (edited version) and heterodimer (non-edited version) of this alpha chain and a beta chain (AC P0CI43).</text>
</comment>
<comment type="subcellular location">
    <subcellularLocation>
        <location evidence="7 8">Secreted</location>
    </subcellularLocation>
</comment>
<comment type="tissue specificity">
    <text evidence="7 8">Expressed by the venom gland.</text>
</comment>
<comment type="domain">
    <text evidence="6">Has the structural arrangement of an alpha-helix connected to antiparallel beta-sheets by disulfide bonds (CS-alpha/beta).</text>
</comment>
<comment type="RNA editing">
    <location>
        <position position="81" evidence="2"/>
    </location>
    <text evidence="2">The stop codon (UGA) at position 81 is created by RNA editing.</text>
</comment>
<comment type="similarity">
    <text evidence="6">Belongs to the long (3 C-C) scorpion toxin superfamily.</text>
</comment>
<sequence>MKISLVTWLITALCLMEIEEIDGDTPGNYPVDFQGIYYECIVYNRCERDCKIHGASYGYCYAGVCFCEYLPDENKNFWDVMKKQCDYMNN</sequence>
<dbReference type="EMBL" id="GEUW01000068">
    <property type="protein sequence ID" value="JAW06977.1"/>
    <property type="molecule type" value="mRNA"/>
</dbReference>
<dbReference type="EMBL" id="GEUW01000028">
    <property type="protein sequence ID" value="JAW07017.1"/>
    <property type="molecule type" value="mRNA"/>
</dbReference>
<dbReference type="EMBL" id="MT450720">
    <property type="protein sequence ID" value="QPD99056.1"/>
    <property type="molecule type" value="mRNA"/>
</dbReference>
<dbReference type="SMR" id="A0A218QX08"/>
<dbReference type="GO" id="GO:0005576">
    <property type="term" value="C:extracellular region"/>
    <property type="evidence" value="ECO:0007669"/>
    <property type="project" value="UniProtKB-SubCell"/>
</dbReference>
<dbReference type="GO" id="GO:0019871">
    <property type="term" value="F:sodium channel inhibitor activity"/>
    <property type="evidence" value="ECO:0007669"/>
    <property type="project" value="InterPro"/>
</dbReference>
<dbReference type="GO" id="GO:0090729">
    <property type="term" value="F:toxin activity"/>
    <property type="evidence" value="ECO:0007669"/>
    <property type="project" value="UniProtKB-KW"/>
</dbReference>
<dbReference type="CDD" id="cd23106">
    <property type="entry name" value="neurotoxins_LC_scorpion"/>
    <property type="match status" value="1"/>
</dbReference>
<dbReference type="Gene3D" id="3.30.30.10">
    <property type="entry name" value="Knottin, scorpion toxin-like"/>
    <property type="match status" value="1"/>
</dbReference>
<dbReference type="InterPro" id="IPR044062">
    <property type="entry name" value="LCN-type_CS_alpha_beta_dom"/>
</dbReference>
<dbReference type="InterPro" id="IPR036574">
    <property type="entry name" value="Scorpion_toxin-like_sf"/>
</dbReference>
<dbReference type="InterPro" id="IPR002061">
    <property type="entry name" value="Scorpion_toxinL/defensin"/>
</dbReference>
<dbReference type="Pfam" id="PF00537">
    <property type="entry name" value="Toxin_3"/>
    <property type="match status" value="1"/>
</dbReference>
<dbReference type="SUPFAM" id="SSF57095">
    <property type="entry name" value="Scorpion toxin-like"/>
    <property type="match status" value="1"/>
</dbReference>
<dbReference type="PROSITE" id="PS51863">
    <property type="entry name" value="LCN_CSAB"/>
    <property type="match status" value="1"/>
</dbReference>
<proteinExistence type="inferred from homology"/>